<name>GREA_STRA5</name>
<sequence length="160" mass="17600">MAEKTYPMTQVEKDQLEKELEELKLVRRPEVVERIKIARSYGDLSENSEYDAAKDEQAFVEGQIQILETKIRYAEIIDSDAVAKDEVAIGKTVLVQEVGTNDKDTYHIVGAAGADIFSGKISNESPIAHALIGKKTGDLATIESPAGSYQVEIISVEKTN</sequence>
<proteinExistence type="inferred from homology"/>
<accession>Q8DY80</accession>
<feature type="chain" id="PRO_1000034305" description="Transcription elongation factor GreA">
    <location>
        <begin position="1"/>
        <end position="160"/>
    </location>
</feature>
<feature type="coiled-coil region" evidence="1">
    <location>
        <begin position="1"/>
        <end position="72"/>
    </location>
</feature>
<organism>
    <name type="scientific">Streptococcus agalactiae serotype V (strain ATCC BAA-611 / 2603 V/R)</name>
    <dbReference type="NCBI Taxonomy" id="208435"/>
    <lineage>
        <taxon>Bacteria</taxon>
        <taxon>Bacillati</taxon>
        <taxon>Bacillota</taxon>
        <taxon>Bacilli</taxon>
        <taxon>Lactobacillales</taxon>
        <taxon>Streptococcaceae</taxon>
        <taxon>Streptococcus</taxon>
    </lineage>
</organism>
<reference key="1">
    <citation type="journal article" date="2002" name="Proc. Natl. Acad. Sci. U.S.A.">
        <title>Complete genome sequence and comparative genomic analysis of an emerging human pathogen, serotype V Streptococcus agalactiae.</title>
        <authorList>
            <person name="Tettelin H."/>
            <person name="Masignani V."/>
            <person name="Cieslewicz M.J."/>
            <person name="Eisen J.A."/>
            <person name="Peterson S.N."/>
            <person name="Wessels M.R."/>
            <person name="Paulsen I.T."/>
            <person name="Nelson K.E."/>
            <person name="Margarit I."/>
            <person name="Read T.D."/>
            <person name="Madoff L.C."/>
            <person name="Wolf A.M."/>
            <person name="Beanan M.J."/>
            <person name="Brinkac L.M."/>
            <person name="Daugherty S.C."/>
            <person name="DeBoy R.T."/>
            <person name="Durkin A.S."/>
            <person name="Kolonay J.F."/>
            <person name="Madupu R."/>
            <person name="Lewis M.R."/>
            <person name="Radune D."/>
            <person name="Fedorova N.B."/>
            <person name="Scanlan D."/>
            <person name="Khouri H.M."/>
            <person name="Mulligan S."/>
            <person name="Carty H.A."/>
            <person name="Cline R.T."/>
            <person name="Van Aken S.E."/>
            <person name="Gill J."/>
            <person name="Scarselli M."/>
            <person name="Mora M."/>
            <person name="Iacobini E.T."/>
            <person name="Brettoni C."/>
            <person name="Galli G."/>
            <person name="Mariani M."/>
            <person name="Vegni F."/>
            <person name="Maione D."/>
            <person name="Rinaudo D."/>
            <person name="Rappuoli R."/>
            <person name="Telford J.L."/>
            <person name="Kasper D.L."/>
            <person name="Grandi G."/>
            <person name="Fraser C.M."/>
        </authorList>
    </citation>
    <scope>NUCLEOTIDE SEQUENCE [LARGE SCALE GENOMIC DNA]</scope>
    <source>
        <strain>ATCC BAA-611 / 2603 V/R</strain>
    </source>
</reference>
<protein>
    <recommendedName>
        <fullName evidence="1">Transcription elongation factor GreA</fullName>
    </recommendedName>
    <alternativeName>
        <fullName evidence="1">Transcript cleavage factor GreA</fullName>
    </alternativeName>
</protein>
<evidence type="ECO:0000255" key="1">
    <source>
        <dbReference type="HAMAP-Rule" id="MF_00105"/>
    </source>
</evidence>
<dbReference type="EMBL" id="AE009948">
    <property type="protein sequence ID" value="AAN00476.1"/>
    <property type="molecule type" value="Genomic_DNA"/>
</dbReference>
<dbReference type="RefSeq" id="NP_688603.1">
    <property type="nucleotide sequence ID" value="NC_004116.1"/>
</dbReference>
<dbReference type="RefSeq" id="WP_000818772.1">
    <property type="nucleotide sequence ID" value="NC_004116.1"/>
</dbReference>
<dbReference type="SMR" id="Q8DY80"/>
<dbReference type="STRING" id="208435.SAG1612"/>
<dbReference type="GeneID" id="66886458"/>
<dbReference type="KEGG" id="sag:SAG1612"/>
<dbReference type="PATRIC" id="fig|208435.3.peg.1622"/>
<dbReference type="HOGENOM" id="CLU_101379_2_1_9"/>
<dbReference type="OrthoDB" id="9808774at2"/>
<dbReference type="Proteomes" id="UP000000821">
    <property type="component" value="Chromosome"/>
</dbReference>
<dbReference type="GO" id="GO:0003677">
    <property type="term" value="F:DNA binding"/>
    <property type="evidence" value="ECO:0007669"/>
    <property type="project" value="UniProtKB-UniRule"/>
</dbReference>
<dbReference type="GO" id="GO:0070063">
    <property type="term" value="F:RNA polymerase binding"/>
    <property type="evidence" value="ECO:0007669"/>
    <property type="project" value="InterPro"/>
</dbReference>
<dbReference type="GO" id="GO:0006354">
    <property type="term" value="P:DNA-templated transcription elongation"/>
    <property type="evidence" value="ECO:0007669"/>
    <property type="project" value="TreeGrafter"/>
</dbReference>
<dbReference type="GO" id="GO:0032784">
    <property type="term" value="P:regulation of DNA-templated transcription elongation"/>
    <property type="evidence" value="ECO:0007669"/>
    <property type="project" value="UniProtKB-UniRule"/>
</dbReference>
<dbReference type="FunFam" id="1.10.287.180:FF:000001">
    <property type="entry name" value="Transcription elongation factor GreA"/>
    <property type="match status" value="1"/>
</dbReference>
<dbReference type="FunFam" id="3.10.50.30:FF:000001">
    <property type="entry name" value="Transcription elongation factor GreA"/>
    <property type="match status" value="1"/>
</dbReference>
<dbReference type="Gene3D" id="3.10.50.30">
    <property type="entry name" value="Transcription elongation factor, GreA/GreB, C-terminal domain"/>
    <property type="match status" value="1"/>
</dbReference>
<dbReference type="Gene3D" id="1.10.287.180">
    <property type="entry name" value="Transcription elongation factor, GreA/GreB, N-terminal domain"/>
    <property type="match status" value="1"/>
</dbReference>
<dbReference type="HAMAP" id="MF_00105">
    <property type="entry name" value="GreA_GreB"/>
    <property type="match status" value="1"/>
</dbReference>
<dbReference type="InterPro" id="IPR036953">
    <property type="entry name" value="GreA/GreB_C_sf"/>
</dbReference>
<dbReference type="InterPro" id="IPR018151">
    <property type="entry name" value="TF_GreA/GreB_CS"/>
</dbReference>
<dbReference type="InterPro" id="IPR006359">
    <property type="entry name" value="Tscrpt_elong_fac_GreA"/>
</dbReference>
<dbReference type="InterPro" id="IPR028624">
    <property type="entry name" value="Tscrpt_elong_fac_GreA/B"/>
</dbReference>
<dbReference type="InterPro" id="IPR001437">
    <property type="entry name" value="Tscrpt_elong_fac_GreA/B_C"/>
</dbReference>
<dbReference type="InterPro" id="IPR023459">
    <property type="entry name" value="Tscrpt_elong_fac_GreA/B_fam"/>
</dbReference>
<dbReference type="InterPro" id="IPR022691">
    <property type="entry name" value="Tscrpt_elong_fac_GreA/B_N"/>
</dbReference>
<dbReference type="InterPro" id="IPR036805">
    <property type="entry name" value="Tscrpt_elong_fac_GreA/B_N_sf"/>
</dbReference>
<dbReference type="NCBIfam" id="TIGR01462">
    <property type="entry name" value="greA"/>
    <property type="match status" value="1"/>
</dbReference>
<dbReference type="NCBIfam" id="NF001260">
    <property type="entry name" value="PRK00226.1-1"/>
    <property type="match status" value="1"/>
</dbReference>
<dbReference type="NCBIfam" id="NF001263">
    <property type="entry name" value="PRK00226.1-4"/>
    <property type="match status" value="1"/>
</dbReference>
<dbReference type="PANTHER" id="PTHR30437">
    <property type="entry name" value="TRANSCRIPTION ELONGATION FACTOR GREA"/>
    <property type="match status" value="1"/>
</dbReference>
<dbReference type="PANTHER" id="PTHR30437:SF4">
    <property type="entry name" value="TRANSCRIPTION ELONGATION FACTOR GREA"/>
    <property type="match status" value="1"/>
</dbReference>
<dbReference type="Pfam" id="PF01272">
    <property type="entry name" value="GreA_GreB"/>
    <property type="match status" value="1"/>
</dbReference>
<dbReference type="Pfam" id="PF03449">
    <property type="entry name" value="GreA_GreB_N"/>
    <property type="match status" value="1"/>
</dbReference>
<dbReference type="PIRSF" id="PIRSF006092">
    <property type="entry name" value="GreA_GreB"/>
    <property type="match status" value="1"/>
</dbReference>
<dbReference type="SUPFAM" id="SSF54534">
    <property type="entry name" value="FKBP-like"/>
    <property type="match status" value="1"/>
</dbReference>
<dbReference type="SUPFAM" id="SSF46557">
    <property type="entry name" value="GreA transcript cleavage protein, N-terminal domain"/>
    <property type="match status" value="1"/>
</dbReference>
<dbReference type="PROSITE" id="PS00829">
    <property type="entry name" value="GREAB_1"/>
    <property type="match status" value="1"/>
</dbReference>
<dbReference type="PROSITE" id="PS00830">
    <property type="entry name" value="GREAB_2"/>
    <property type="match status" value="1"/>
</dbReference>
<comment type="function">
    <text evidence="1">Necessary for efficient RNA polymerase transcription elongation past template-encoded arresting sites. The arresting sites in DNA have the property of trapping a certain fraction of elongating RNA polymerases that pass through, resulting in locked ternary complexes. Cleavage of the nascent transcript by cleavage factors such as GreA or GreB allows the resumption of elongation from the new 3'terminus. GreA releases sequences of 2 to 3 nucleotides.</text>
</comment>
<comment type="similarity">
    <text evidence="1">Belongs to the GreA/GreB family.</text>
</comment>
<gene>
    <name evidence="1" type="primary">greA</name>
    <name type="ordered locus">SAG1612</name>
</gene>
<keyword id="KW-0175">Coiled coil</keyword>
<keyword id="KW-0238">DNA-binding</keyword>
<keyword id="KW-1185">Reference proteome</keyword>
<keyword id="KW-0804">Transcription</keyword>
<keyword id="KW-0805">Transcription regulation</keyword>